<proteinExistence type="inferred from homology"/>
<comment type="function">
    <text evidence="1">Mediates the interaction of DNA replication initiator protein DnaA with DNA polymerase subunit beta sliding clamp (dnaN). Stimulates hydrolysis of ATP-DnaA to ADP-DnaA, rendering DnaA inactive for reinitiation, a process called regulatory inhibition of DnaA or RIDA (By similarity).</text>
</comment>
<comment type="subunit">
    <text evidence="2">The active form seems to be an ADP-bound monomer. Forms the RIDA complex (regulatory inactivation of DnaA) of ATP-DnaA, ADP-Hda and the DNA-loaded beta sliding clamp (dnaN).</text>
</comment>
<comment type="similarity">
    <text evidence="2">Belongs to the DnaA family. HdA subfamily.</text>
</comment>
<comment type="sequence caution" evidence="3">
    <conflict type="erroneous initiation">
        <sequence resource="EMBL-CDS" id="ACR62035"/>
    </conflict>
</comment>
<gene>
    <name evidence="2" type="primary">hda</name>
    <name type="ordered locus">BWG_2260</name>
</gene>
<sequence length="233" mass="26633">MNTPAQLSLPLYLPDDETFASFWPGDNSSLLAALQNVLRQEHSGYIYLWAREGAGRSHLLHAACAELSQRGDAVGYVPLDKRTWFVPEVLDGMEHLSLVCIDNIECIAGDELWEMAIFDLYNRILESGKTRLLITGDRPPRQLNLGLPDLASRLDWGQIYKLQPLSDEDKLQALQLRARLRGFELPEDVGRFLLKRLDREMRTLFMTLDQLDRASITAQRKLTIPFVKEILKL</sequence>
<accession>C4ZX71</accession>
<name>HDA_ECOBW</name>
<evidence type="ECO:0000250" key="1"/>
<evidence type="ECO:0000255" key="2">
    <source>
        <dbReference type="HAMAP-Rule" id="MF_01158"/>
    </source>
</evidence>
<evidence type="ECO:0000305" key="3"/>
<organism>
    <name type="scientific">Escherichia coli (strain K12 / MC4100 / BW2952)</name>
    <dbReference type="NCBI Taxonomy" id="595496"/>
    <lineage>
        <taxon>Bacteria</taxon>
        <taxon>Pseudomonadati</taxon>
        <taxon>Pseudomonadota</taxon>
        <taxon>Gammaproteobacteria</taxon>
        <taxon>Enterobacterales</taxon>
        <taxon>Enterobacteriaceae</taxon>
        <taxon>Escherichia</taxon>
    </lineage>
</organism>
<dbReference type="EMBL" id="CP001396">
    <property type="protein sequence ID" value="ACR62035.1"/>
    <property type="status" value="ALT_INIT"/>
    <property type="molecule type" value="Genomic_DNA"/>
</dbReference>
<dbReference type="RefSeq" id="WP_001307333.1">
    <property type="nucleotide sequence ID" value="NC_012759.1"/>
</dbReference>
<dbReference type="SMR" id="C4ZX71"/>
<dbReference type="KEGG" id="ebw:BWG_2260"/>
<dbReference type="HOGENOM" id="CLU_072265_1_1_6"/>
<dbReference type="GO" id="GO:0006270">
    <property type="term" value="P:DNA replication initiation"/>
    <property type="evidence" value="ECO:0007669"/>
    <property type="project" value="TreeGrafter"/>
</dbReference>
<dbReference type="GO" id="GO:0032297">
    <property type="term" value="P:negative regulation of DNA-templated DNA replication initiation"/>
    <property type="evidence" value="ECO:0007669"/>
    <property type="project" value="InterPro"/>
</dbReference>
<dbReference type="FunFam" id="1.10.8.60:FF:000024">
    <property type="entry name" value="DnaA regulatory inactivator Hda"/>
    <property type="match status" value="1"/>
</dbReference>
<dbReference type="FunFam" id="3.40.50.300:FF:000452">
    <property type="entry name" value="DnaA regulatory inactivator Hda"/>
    <property type="match status" value="1"/>
</dbReference>
<dbReference type="Gene3D" id="1.10.8.60">
    <property type="match status" value="1"/>
</dbReference>
<dbReference type="Gene3D" id="3.40.50.300">
    <property type="entry name" value="P-loop containing nucleotide triphosphate hydrolases"/>
    <property type="match status" value="1"/>
</dbReference>
<dbReference type="HAMAP" id="MF_01158">
    <property type="entry name" value="Hda"/>
    <property type="match status" value="1"/>
</dbReference>
<dbReference type="InterPro" id="IPR020591">
    <property type="entry name" value="Chromosome_initiator_DnaA-like"/>
</dbReference>
<dbReference type="InterPro" id="IPR013317">
    <property type="entry name" value="DnaA_dom"/>
</dbReference>
<dbReference type="InterPro" id="IPR017788">
    <property type="entry name" value="Hda"/>
</dbReference>
<dbReference type="InterPro" id="IPR022864">
    <property type="entry name" value="Hda_Enterobact"/>
</dbReference>
<dbReference type="InterPro" id="IPR055199">
    <property type="entry name" value="Hda_lid"/>
</dbReference>
<dbReference type="InterPro" id="IPR027417">
    <property type="entry name" value="P-loop_NTPase"/>
</dbReference>
<dbReference type="NCBIfam" id="TIGR03420">
    <property type="entry name" value="DnaA_homol_Hda"/>
    <property type="match status" value="1"/>
</dbReference>
<dbReference type="NCBIfam" id="NF005982">
    <property type="entry name" value="PRK08084.1"/>
    <property type="match status" value="1"/>
</dbReference>
<dbReference type="PANTHER" id="PTHR30050">
    <property type="entry name" value="CHROMOSOMAL REPLICATION INITIATOR PROTEIN DNAA"/>
    <property type="match status" value="1"/>
</dbReference>
<dbReference type="PANTHER" id="PTHR30050:SF5">
    <property type="entry name" value="DNAA REGULATORY INACTIVATOR HDA"/>
    <property type="match status" value="1"/>
</dbReference>
<dbReference type="Pfam" id="PF00308">
    <property type="entry name" value="Bac_DnaA"/>
    <property type="match status" value="1"/>
</dbReference>
<dbReference type="Pfam" id="PF22688">
    <property type="entry name" value="Hda_lid"/>
    <property type="match status" value="1"/>
</dbReference>
<dbReference type="PRINTS" id="PR00051">
    <property type="entry name" value="DNAA"/>
</dbReference>
<dbReference type="SUPFAM" id="SSF52540">
    <property type="entry name" value="P-loop containing nucleoside triphosphate hydrolases"/>
    <property type="match status" value="1"/>
</dbReference>
<keyword id="KW-0235">DNA replication</keyword>
<keyword id="KW-0236">DNA replication inhibitor</keyword>
<reference key="1">
    <citation type="journal article" date="2009" name="J. Bacteriol.">
        <title>Genomic sequencing reveals regulatory mutations and recombinational events in the widely used MC4100 lineage of Escherichia coli K-12.</title>
        <authorList>
            <person name="Ferenci T."/>
            <person name="Zhou Z."/>
            <person name="Betteridge T."/>
            <person name="Ren Y."/>
            <person name="Liu Y."/>
            <person name="Feng L."/>
            <person name="Reeves P.R."/>
            <person name="Wang L."/>
        </authorList>
    </citation>
    <scope>NUCLEOTIDE SEQUENCE [LARGE SCALE GENOMIC DNA]</scope>
    <source>
        <strain>K12 / MC4100 / BW2952</strain>
    </source>
</reference>
<protein>
    <recommendedName>
        <fullName evidence="2">DnaA regulatory inactivator Hda</fullName>
    </recommendedName>
</protein>
<feature type="chain" id="PRO_1000213699" description="DnaA regulatory inactivator Hda">
    <location>
        <begin position="1"/>
        <end position="233"/>
    </location>
</feature>